<organism>
    <name type="scientific">Aeromonas salmonicida (strain A449)</name>
    <dbReference type="NCBI Taxonomy" id="382245"/>
    <lineage>
        <taxon>Bacteria</taxon>
        <taxon>Pseudomonadati</taxon>
        <taxon>Pseudomonadota</taxon>
        <taxon>Gammaproteobacteria</taxon>
        <taxon>Aeromonadales</taxon>
        <taxon>Aeromonadaceae</taxon>
        <taxon>Aeromonas</taxon>
    </lineage>
</organism>
<comment type="function">
    <text evidence="1">Catalyzes the transfer of an acyl group from acyl-phosphate (acyl-PO(4)) to glycerol-3-phosphate (G3P) to form lysophosphatidic acid (LPA). This enzyme utilizes acyl-phosphate as fatty acyl donor, but not acyl-CoA or acyl-ACP.</text>
</comment>
<comment type="catalytic activity">
    <reaction evidence="1">
        <text>an acyl phosphate + sn-glycerol 3-phosphate = a 1-acyl-sn-glycero-3-phosphate + phosphate</text>
        <dbReference type="Rhea" id="RHEA:34075"/>
        <dbReference type="ChEBI" id="CHEBI:43474"/>
        <dbReference type="ChEBI" id="CHEBI:57597"/>
        <dbReference type="ChEBI" id="CHEBI:57970"/>
        <dbReference type="ChEBI" id="CHEBI:59918"/>
        <dbReference type="EC" id="2.3.1.275"/>
    </reaction>
</comment>
<comment type="pathway">
    <text evidence="1">Lipid metabolism; phospholipid metabolism.</text>
</comment>
<comment type="subunit">
    <text evidence="1">Probably interacts with PlsX.</text>
</comment>
<comment type="subcellular location">
    <subcellularLocation>
        <location evidence="1">Cell inner membrane</location>
        <topology evidence="1">Multi-pass membrane protein</topology>
    </subcellularLocation>
</comment>
<comment type="similarity">
    <text evidence="1">Belongs to the PlsY family.</text>
</comment>
<proteinExistence type="inferred from homology"/>
<gene>
    <name evidence="1" type="primary">plsY</name>
    <name type="ordered locus">ASA_0439</name>
</gene>
<dbReference type="EC" id="2.3.1.275" evidence="1"/>
<dbReference type="EMBL" id="CP000644">
    <property type="protein sequence ID" value="ABO88617.1"/>
    <property type="molecule type" value="Genomic_DNA"/>
</dbReference>
<dbReference type="RefSeq" id="WP_011898298.1">
    <property type="nucleotide sequence ID" value="NC_009348.1"/>
</dbReference>
<dbReference type="SMR" id="A4SI95"/>
<dbReference type="STRING" id="29491.GCA_000820065_04437"/>
<dbReference type="KEGG" id="asa:ASA_0439"/>
<dbReference type="eggNOG" id="COG0344">
    <property type="taxonomic scope" value="Bacteria"/>
</dbReference>
<dbReference type="HOGENOM" id="CLU_081254_0_2_6"/>
<dbReference type="UniPathway" id="UPA00085"/>
<dbReference type="Proteomes" id="UP000000225">
    <property type="component" value="Chromosome"/>
</dbReference>
<dbReference type="GO" id="GO:0005886">
    <property type="term" value="C:plasma membrane"/>
    <property type="evidence" value="ECO:0007669"/>
    <property type="project" value="UniProtKB-SubCell"/>
</dbReference>
<dbReference type="GO" id="GO:0043772">
    <property type="term" value="F:acyl-phosphate glycerol-3-phosphate acyltransferase activity"/>
    <property type="evidence" value="ECO:0007669"/>
    <property type="project" value="UniProtKB-UniRule"/>
</dbReference>
<dbReference type="GO" id="GO:0008654">
    <property type="term" value="P:phospholipid biosynthetic process"/>
    <property type="evidence" value="ECO:0007669"/>
    <property type="project" value="UniProtKB-UniRule"/>
</dbReference>
<dbReference type="HAMAP" id="MF_01043">
    <property type="entry name" value="PlsY"/>
    <property type="match status" value="1"/>
</dbReference>
<dbReference type="InterPro" id="IPR003811">
    <property type="entry name" value="G3P_acylTferase_PlsY"/>
</dbReference>
<dbReference type="NCBIfam" id="TIGR00023">
    <property type="entry name" value="glycerol-3-phosphate 1-O-acyltransferase PlsY"/>
    <property type="match status" value="1"/>
</dbReference>
<dbReference type="PANTHER" id="PTHR30309:SF0">
    <property type="entry name" value="GLYCEROL-3-PHOSPHATE ACYLTRANSFERASE-RELATED"/>
    <property type="match status" value="1"/>
</dbReference>
<dbReference type="PANTHER" id="PTHR30309">
    <property type="entry name" value="INNER MEMBRANE PROTEIN YGIH"/>
    <property type="match status" value="1"/>
</dbReference>
<dbReference type="Pfam" id="PF02660">
    <property type="entry name" value="G3P_acyltransf"/>
    <property type="match status" value="1"/>
</dbReference>
<dbReference type="SMART" id="SM01207">
    <property type="entry name" value="G3P_acyltransf"/>
    <property type="match status" value="1"/>
</dbReference>
<protein>
    <recommendedName>
        <fullName evidence="1">Glycerol-3-phosphate acyltransferase</fullName>
    </recommendedName>
    <alternativeName>
        <fullName evidence="1">Acyl-PO4 G3P acyltransferase</fullName>
    </alternativeName>
    <alternativeName>
        <fullName evidence="1">Acyl-phosphate--glycerol-3-phosphate acyltransferase</fullName>
    </alternativeName>
    <alternativeName>
        <fullName evidence="1">G3P acyltransferase</fullName>
        <shortName evidence="1">GPAT</shortName>
        <ecNumber evidence="1">2.3.1.275</ecNumber>
    </alternativeName>
    <alternativeName>
        <fullName evidence="1">Lysophosphatidic acid synthase</fullName>
        <shortName evidence="1">LPA synthase</shortName>
    </alternativeName>
</protein>
<sequence length="220" mass="23964">MTALTILMIILAYLGGSLSSAVLVSRITGLPDPRDHGSHNPGATNVLRLGGRVAALVVLLLDVLKGTAPVYLAWYLQIKPVYLGFIGVAACLGHMYPIFFHFRGGKGVATALGTMMPIGFTMGGAVIGTWLVVLLVSGYSSLASIITVLLSPLFTYLIKPEYTLPVSLLSCLILIRHHENIARLLKGEEPRVWGRQAQRRQEEVGEMDDVAQKRDERDKK</sequence>
<name>PLSY_AERS4</name>
<keyword id="KW-0997">Cell inner membrane</keyword>
<keyword id="KW-1003">Cell membrane</keyword>
<keyword id="KW-0444">Lipid biosynthesis</keyword>
<keyword id="KW-0443">Lipid metabolism</keyword>
<keyword id="KW-0472">Membrane</keyword>
<keyword id="KW-0594">Phospholipid biosynthesis</keyword>
<keyword id="KW-1208">Phospholipid metabolism</keyword>
<keyword id="KW-0808">Transferase</keyword>
<keyword id="KW-0812">Transmembrane</keyword>
<keyword id="KW-1133">Transmembrane helix</keyword>
<evidence type="ECO:0000255" key="1">
    <source>
        <dbReference type="HAMAP-Rule" id="MF_01043"/>
    </source>
</evidence>
<evidence type="ECO:0000256" key="2">
    <source>
        <dbReference type="SAM" id="MobiDB-lite"/>
    </source>
</evidence>
<feature type="chain" id="PRO_1000064156" description="Glycerol-3-phosphate acyltransferase">
    <location>
        <begin position="1"/>
        <end position="220"/>
    </location>
</feature>
<feature type="transmembrane region" description="Helical" evidence="1">
    <location>
        <begin position="4"/>
        <end position="24"/>
    </location>
</feature>
<feature type="transmembrane region" description="Helical" evidence="1">
    <location>
        <begin position="53"/>
        <end position="73"/>
    </location>
</feature>
<feature type="transmembrane region" description="Helical" evidence="1">
    <location>
        <begin position="80"/>
        <end position="100"/>
    </location>
</feature>
<feature type="transmembrane region" description="Helical" evidence="1">
    <location>
        <begin position="116"/>
        <end position="136"/>
    </location>
</feature>
<feature type="transmembrane region" description="Helical" evidence="1">
    <location>
        <begin position="138"/>
        <end position="158"/>
    </location>
</feature>
<feature type="region of interest" description="Disordered" evidence="2">
    <location>
        <begin position="193"/>
        <end position="220"/>
    </location>
</feature>
<feature type="compositionally biased region" description="Basic and acidic residues" evidence="2">
    <location>
        <begin position="210"/>
        <end position="220"/>
    </location>
</feature>
<reference key="1">
    <citation type="journal article" date="2008" name="BMC Genomics">
        <title>The genome of Aeromonas salmonicida subsp. salmonicida A449: insights into the evolution of a fish pathogen.</title>
        <authorList>
            <person name="Reith M.E."/>
            <person name="Singh R.K."/>
            <person name="Curtis B."/>
            <person name="Boyd J.M."/>
            <person name="Bouevitch A."/>
            <person name="Kimball J."/>
            <person name="Munholland J."/>
            <person name="Murphy C."/>
            <person name="Sarty D."/>
            <person name="Williams J."/>
            <person name="Nash J.H."/>
            <person name="Johnson S.C."/>
            <person name="Brown L.L."/>
        </authorList>
    </citation>
    <scope>NUCLEOTIDE SEQUENCE [LARGE SCALE GENOMIC DNA]</scope>
    <source>
        <strain>A449</strain>
    </source>
</reference>
<accession>A4SI95</accession>